<protein>
    <recommendedName>
        <fullName evidence="1">Ribonuclease Z</fullName>
        <shortName evidence="1">RNase Z</shortName>
        <ecNumber evidence="1">3.1.26.11</ecNumber>
    </recommendedName>
    <alternativeName>
        <fullName evidence="1">tRNA 3 endonuclease</fullName>
    </alternativeName>
    <alternativeName>
        <fullName evidence="1">tRNase Z</fullName>
    </alternativeName>
</protein>
<evidence type="ECO:0000255" key="1">
    <source>
        <dbReference type="HAMAP-Rule" id="MF_01818"/>
    </source>
</evidence>
<evidence type="ECO:0000256" key="2">
    <source>
        <dbReference type="SAM" id="MobiDB-lite"/>
    </source>
</evidence>
<organism>
    <name type="scientific">Salinibacter ruber (strain DSM 13855 / M31)</name>
    <dbReference type="NCBI Taxonomy" id="309807"/>
    <lineage>
        <taxon>Bacteria</taxon>
        <taxon>Pseudomonadati</taxon>
        <taxon>Rhodothermota</taxon>
        <taxon>Rhodothermia</taxon>
        <taxon>Rhodothermales</taxon>
        <taxon>Salinibacteraceae</taxon>
        <taxon>Salinibacter</taxon>
    </lineage>
</organism>
<feature type="chain" id="PRO_1000070326" description="Ribonuclease Z">
    <location>
        <begin position="1"/>
        <end position="322"/>
    </location>
</feature>
<feature type="region of interest" description="Disordered" evidence="2">
    <location>
        <begin position="300"/>
        <end position="322"/>
    </location>
</feature>
<feature type="compositionally biased region" description="Basic and acidic residues" evidence="2">
    <location>
        <begin position="300"/>
        <end position="314"/>
    </location>
</feature>
<feature type="active site" description="Proton acceptor" evidence="1">
    <location>
        <position position="66"/>
    </location>
</feature>
<feature type="binding site" evidence="1">
    <location>
        <position position="62"/>
    </location>
    <ligand>
        <name>Zn(2+)</name>
        <dbReference type="ChEBI" id="CHEBI:29105"/>
        <label>1</label>
        <note>catalytic</note>
    </ligand>
</feature>
<feature type="binding site" evidence="1">
    <location>
        <position position="64"/>
    </location>
    <ligand>
        <name>Zn(2+)</name>
        <dbReference type="ChEBI" id="CHEBI:29105"/>
        <label>1</label>
        <note>catalytic</note>
    </ligand>
</feature>
<feature type="binding site" evidence="1">
    <location>
        <position position="66"/>
    </location>
    <ligand>
        <name>Zn(2+)</name>
        <dbReference type="ChEBI" id="CHEBI:29105"/>
        <label>2</label>
        <note>catalytic</note>
    </ligand>
</feature>
<feature type="binding site" evidence="1">
    <location>
        <position position="67"/>
    </location>
    <ligand>
        <name>Zn(2+)</name>
        <dbReference type="ChEBI" id="CHEBI:29105"/>
        <label>2</label>
        <note>catalytic</note>
    </ligand>
</feature>
<feature type="binding site" evidence="1">
    <location>
        <position position="143"/>
    </location>
    <ligand>
        <name>Zn(2+)</name>
        <dbReference type="ChEBI" id="CHEBI:29105"/>
        <label>1</label>
        <note>catalytic</note>
    </ligand>
</feature>
<feature type="binding site" evidence="1">
    <location>
        <position position="215"/>
    </location>
    <ligand>
        <name>Zn(2+)</name>
        <dbReference type="ChEBI" id="CHEBI:29105"/>
        <label>1</label>
        <note>catalytic</note>
    </ligand>
</feature>
<feature type="binding site" evidence="1">
    <location>
        <position position="215"/>
    </location>
    <ligand>
        <name>Zn(2+)</name>
        <dbReference type="ChEBI" id="CHEBI:29105"/>
        <label>2</label>
        <note>catalytic</note>
    </ligand>
</feature>
<feature type="binding site" evidence="1">
    <location>
        <position position="273"/>
    </location>
    <ligand>
        <name>Zn(2+)</name>
        <dbReference type="ChEBI" id="CHEBI:29105"/>
        <label>2</label>
        <note>catalytic</note>
    </ligand>
</feature>
<accession>Q2S0L2</accession>
<reference key="1">
    <citation type="journal article" date="2005" name="Proc. Natl. Acad. Sci. U.S.A.">
        <title>The genome of Salinibacter ruber: convergence and gene exchange among hyperhalophilic bacteria and archaea.</title>
        <authorList>
            <person name="Mongodin E.F."/>
            <person name="Nelson K.E."/>
            <person name="Daugherty S."/>
            <person name="DeBoy R.T."/>
            <person name="Wister J."/>
            <person name="Khouri H."/>
            <person name="Weidman J."/>
            <person name="Walsh D.A."/>
            <person name="Papke R.T."/>
            <person name="Sanchez Perez G."/>
            <person name="Sharma A.K."/>
            <person name="Nesbo C.L."/>
            <person name="MacLeod D."/>
            <person name="Bapteste E."/>
            <person name="Doolittle W.F."/>
            <person name="Charlebois R.L."/>
            <person name="Legault B."/>
            <person name="Rodriguez-Valera F."/>
        </authorList>
    </citation>
    <scope>NUCLEOTIDE SEQUENCE [LARGE SCALE GENOMIC DNA]</scope>
    <source>
        <strain>DSM 13855 / CECT 5946 / M31</strain>
    </source>
</reference>
<name>RNZ_SALRD</name>
<proteinExistence type="inferred from homology"/>
<sequence length="322" mass="34576">MKIDVIPLGTASAVPTDERHLSALAVERKGQVLLFDCGEGTQYRLREAGLSWARIEAIFVTHLHGDHCYGLPGLLSTMELQQRADPVTLVLPPGGPAMLRAVPGATPARLSFPVHVVEADAAGTLGTVYETDEIAVEARRLDHREVFAMGFRVAERTRPGRFDPERARALGVPEGPAFGRLQNGCPVTTPDGTTVRPGQVLGPPRPGVVAAYVTDTRPCAGGRALAEEADLLYHDATFADDHAARADETGHSTARQAATVAREAGATRLLLGHLSARYPDPAPQEREARSVFPAAEVAEELRRYELDPREKEPDPVGPADES</sequence>
<gene>
    <name evidence="1" type="primary">rnz</name>
    <name type="ordered locus">SRU_2164</name>
</gene>
<dbReference type="EC" id="3.1.26.11" evidence="1"/>
<dbReference type="EMBL" id="CP000159">
    <property type="protein sequence ID" value="ABC45860.1"/>
    <property type="molecule type" value="Genomic_DNA"/>
</dbReference>
<dbReference type="RefSeq" id="WP_011404890.1">
    <property type="nucleotide sequence ID" value="NC_007677.1"/>
</dbReference>
<dbReference type="RefSeq" id="YP_446269.1">
    <property type="nucleotide sequence ID" value="NC_007677.1"/>
</dbReference>
<dbReference type="SMR" id="Q2S0L2"/>
<dbReference type="STRING" id="309807.SRU_2164"/>
<dbReference type="EnsemblBacteria" id="ABC45860">
    <property type="protein sequence ID" value="ABC45860"/>
    <property type="gene ID" value="SRU_2164"/>
</dbReference>
<dbReference type="KEGG" id="sru:SRU_2164"/>
<dbReference type="PATRIC" id="fig|309807.25.peg.2250"/>
<dbReference type="eggNOG" id="COG1234">
    <property type="taxonomic scope" value="Bacteria"/>
</dbReference>
<dbReference type="HOGENOM" id="CLU_031317_2_0_10"/>
<dbReference type="OrthoDB" id="9800940at2"/>
<dbReference type="Proteomes" id="UP000008674">
    <property type="component" value="Chromosome"/>
</dbReference>
<dbReference type="GO" id="GO:0042781">
    <property type="term" value="F:3'-tRNA processing endoribonuclease activity"/>
    <property type="evidence" value="ECO:0007669"/>
    <property type="project" value="UniProtKB-UniRule"/>
</dbReference>
<dbReference type="GO" id="GO:0008270">
    <property type="term" value="F:zinc ion binding"/>
    <property type="evidence" value="ECO:0007669"/>
    <property type="project" value="UniProtKB-UniRule"/>
</dbReference>
<dbReference type="CDD" id="cd07717">
    <property type="entry name" value="RNaseZ_ZiPD-like_MBL-fold"/>
    <property type="match status" value="1"/>
</dbReference>
<dbReference type="Gene3D" id="3.60.15.10">
    <property type="entry name" value="Ribonuclease Z/Hydroxyacylglutathione hydrolase-like"/>
    <property type="match status" value="1"/>
</dbReference>
<dbReference type="HAMAP" id="MF_01818">
    <property type="entry name" value="RNase_Z_BN"/>
    <property type="match status" value="1"/>
</dbReference>
<dbReference type="InterPro" id="IPR001279">
    <property type="entry name" value="Metallo-B-lactamas"/>
</dbReference>
<dbReference type="InterPro" id="IPR036866">
    <property type="entry name" value="RibonucZ/Hydroxyglut_hydro"/>
</dbReference>
<dbReference type="InterPro" id="IPR013471">
    <property type="entry name" value="RNase_Z/BN"/>
</dbReference>
<dbReference type="NCBIfam" id="NF000801">
    <property type="entry name" value="PRK00055.1-3"/>
    <property type="match status" value="1"/>
</dbReference>
<dbReference type="NCBIfam" id="TIGR02651">
    <property type="entry name" value="RNase_Z"/>
    <property type="match status" value="1"/>
</dbReference>
<dbReference type="PANTHER" id="PTHR46018">
    <property type="entry name" value="ZINC PHOSPHODIESTERASE ELAC PROTEIN 1"/>
    <property type="match status" value="1"/>
</dbReference>
<dbReference type="PANTHER" id="PTHR46018:SF2">
    <property type="entry name" value="ZINC PHOSPHODIESTERASE ELAC PROTEIN 1"/>
    <property type="match status" value="1"/>
</dbReference>
<dbReference type="Pfam" id="PF00753">
    <property type="entry name" value="Lactamase_B"/>
    <property type="match status" value="1"/>
</dbReference>
<dbReference type="Pfam" id="PF12706">
    <property type="entry name" value="Lactamase_B_2"/>
    <property type="match status" value="1"/>
</dbReference>
<dbReference type="SUPFAM" id="SSF56281">
    <property type="entry name" value="Metallo-hydrolase/oxidoreductase"/>
    <property type="match status" value="1"/>
</dbReference>
<comment type="function">
    <text evidence="1">Zinc phosphodiesterase, which displays some tRNA 3'-processing endonuclease activity. Probably involved in tRNA maturation, by removing a 3'-trailer from precursor tRNA.</text>
</comment>
<comment type="catalytic activity">
    <reaction evidence="1">
        <text>Endonucleolytic cleavage of RNA, removing extra 3' nucleotides from tRNA precursor, generating 3' termini of tRNAs. A 3'-hydroxy group is left at the tRNA terminus and a 5'-phosphoryl group is left at the trailer molecule.</text>
        <dbReference type="EC" id="3.1.26.11"/>
    </reaction>
</comment>
<comment type="cofactor">
    <cofactor evidence="1">
        <name>Zn(2+)</name>
        <dbReference type="ChEBI" id="CHEBI:29105"/>
    </cofactor>
    <text evidence="1">Binds 2 Zn(2+) ions.</text>
</comment>
<comment type="subunit">
    <text evidence="1">Homodimer.</text>
</comment>
<comment type="similarity">
    <text evidence="1">Belongs to the RNase Z family.</text>
</comment>
<keyword id="KW-0255">Endonuclease</keyword>
<keyword id="KW-0378">Hydrolase</keyword>
<keyword id="KW-0479">Metal-binding</keyword>
<keyword id="KW-0540">Nuclease</keyword>
<keyword id="KW-1185">Reference proteome</keyword>
<keyword id="KW-0819">tRNA processing</keyword>
<keyword id="KW-0862">Zinc</keyword>